<comment type="function">
    <text evidence="1">Catalyzes the condensation of carbamoyl phosphate and aspartate to form carbamoyl aspartate and inorganic phosphate, the committed step in the de novo pyrimidine nucleotide biosynthesis pathway.</text>
</comment>
<comment type="catalytic activity">
    <reaction evidence="1">
        <text>carbamoyl phosphate + L-aspartate = N-carbamoyl-L-aspartate + phosphate + H(+)</text>
        <dbReference type="Rhea" id="RHEA:20013"/>
        <dbReference type="ChEBI" id="CHEBI:15378"/>
        <dbReference type="ChEBI" id="CHEBI:29991"/>
        <dbReference type="ChEBI" id="CHEBI:32814"/>
        <dbReference type="ChEBI" id="CHEBI:43474"/>
        <dbReference type="ChEBI" id="CHEBI:58228"/>
        <dbReference type="EC" id="2.1.3.2"/>
    </reaction>
</comment>
<comment type="pathway">
    <text evidence="1">Pyrimidine metabolism; UMP biosynthesis via de novo pathway; (S)-dihydroorotate from bicarbonate: step 2/3.</text>
</comment>
<comment type="subunit">
    <text evidence="1">Heterododecamer (2C3:3R2) of six catalytic PyrB chains organized as two trimers (C3), and six regulatory PyrI chains organized as three dimers (R2).</text>
</comment>
<comment type="similarity">
    <text evidence="1">Belongs to the aspartate/ornithine carbamoyltransferase superfamily. ATCase family.</text>
</comment>
<name>PYRB_EHRRG</name>
<accession>Q5FGW9</accession>
<proteinExistence type="inferred from homology"/>
<gene>
    <name evidence="1" type="primary">pyrB</name>
    <name type="ordered locus">ERGA_CDS_04370</name>
</gene>
<protein>
    <recommendedName>
        <fullName evidence="1">Aspartate carbamoyltransferase catalytic subunit</fullName>
        <ecNumber evidence="1">2.1.3.2</ecNumber>
    </recommendedName>
    <alternativeName>
        <fullName evidence="1">Aspartate transcarbamylase</fullName>
        <shortName evidence="1">ATCase</shortName>
    </alternativeName>
</protein>
<dbReference type="EC" id="2.1.3.2" evidence="1"/>
<dbReference type="EMBL" id="CR925677">
    <property type="protein sequence ID" value="CAI27889.1"/>
    <property type="molecule type" value="Genomic_DNA"/>
</dbReference>
<dbReference type="RefSeq" id="WP_011255567.1">
    <property type="nucleotide sequence ID" value="NC_006831.1"/>
</dbReference>
<dbReference type="SMR" id="Q5FGW9"/>
<dbReference type="KEGG" id="erg:ERGA_CDS_04370"/>
<dbReference type="HOGENOM" id="CLU_043846_2_1_5"/>
<dbReference type="OrthoDB" id="9774690at2"/>
<dbReference type="UniPathway" id="UPA00070">
    <property type="reaction ID" value="UER00116"/>
</dbReference>
<dbReference type="Proteomes" id="UP000000533">
    <property type="component" value="Chromosome"/>
</dbReference>
<dbReference type="GO" id="GO:0005829">
    <property type="term" value="C:cytosol"/>
    <property type="evidence" value="ECO:0007669"/>
    <property type="project" value="TreeGrafter"/>
</dbReference>
<dbReference type="GO" id="GO:0016597">
    <property type="term" value="F:amino acid binding"/>
    <property type="evidence" value="ECO:0007669"/>
    <property type="project" value="InterPro"/>
</dbReference>
<dbReference type="GO" id="GO:0004070">
    <property type="term" value="F:aspartate carbamoyltransferase activity"/>
    <property type="evidence" value="ECO:0007669"/>
    <property type="project" value="UniProtKB-UniRule"/>
</dbReference>
<dbReference type="GO" id="GO:0006207">
    <property type="term" value="P:'de novo' pyrimidine nucleobase biosynthetic process"/>
    <property type="evidence" value="ECO:0007669"/>
    <property type="project" value="InterPro"/>
</dbReference>
<dbReference type="GO" id="GO:0044205">
    <property type="term" value="P:'de novo' UMP biosynthetic process"/>
    <property type="evidence" value="ECO:0007669"/>
    <property type="project" value="UniProtKB-UniRule"/>
</dbReference>
<dbReference type="GO" id="GO:0006520">
    <property type="term" value="P:amino acid metabolic process"/>
    <property type="evidence" value="ECO:0007669"/>
    <property type="project" value="InterPro"/>
</dbReference>
<dbReference type="Gene3D" id="3.40.50.1370">
    <property type="entry name" value="Aspartate/ornithine carbamoyltransferase"/>
    <property type="match status" value="2"/>
</dbReference>
<dbReference type="HAMAP" id="MF_00001">
    <property type="entry name" value="Asp_carb_tr"/>
    <property type="match status" value="1"/>
</dbReference>
<dbReference type="InterPro" id="IPR006132">
    <property type="entry name" value="Asp/Orn_carbamoyltranf_P-bd"/>
</dbReference>
<dbReference type="InterPro" id="IPR006130">
    <property type="entry name" value="Asp/Orn_carbamoylTrfase"/>
</dbReference>
<dbReference type="InterPro" id="IPR036901">
    <property type="entry name" value="Asp/Orn_carbamoylTrfase_sf"/>
</dbReference>
<dbReference type="InterPro" id="IPR002082">
    <property type="entry name" value="Asp_carbamoyltransf"/>
</dbReference>
<dbReference type="InterPro" id="IPR006131">
    <property type="entry name" value="Asp_carbamoyltransf_Asp/Orn-bd"/>
</dbReference>
<dbReference type="NCBIfam" id="TIGR00670">
    <property type="entry name" value="asp_carb_tr"/>
    <property type="match status" value="1"/>
</dbReference>
<dbReference type="NCBIfam" id="NF002032">
    <property type="entry name" value="PRK00856.1"/>
    <property type="match status" value="1"/>
</dbReference>
<dbReference type="PANTHER" id="PTHR45753:SF6">
    <property type="entry name" value="ASPARTATE CARBAMOYLTRANSFERASE"/>
    <property type="match status" value="1"/>
</dbReference>
<dbReference type="PANTHER" id="PTHR45753">
    <property type="entry name" value="ORNITHINE CARBAMOYLTRANSFERASE, MITOCHONDRIAL"/>
    <property type="match status" value="1"/>
</dbReference>
<dbReference type="Pfam" id="PF00185">
    <property type="entry name" value="OTCace"/>
    <property type="match status" value="1"/>
</dbReference>
<dbReference type="Pfam" id="PF02729">
    <property type="entry name" value="OTCace_N"/>
    <property type="match status" value="1"/>
</dbReference>
<dbReference type="PRINTS" id="PR00100">
    <property type="entry name" value="AOTCASE"/>
</dbReference>
<dbReference type="PRINTS" id="PR00101">
    <property type="entry name" value="ATCASE"/>
</dbReference>
<dbReference type="SUPFAM" id="SSF53671">
    <property type="entry name" value="Aspartate/ornithine carbamoyltransferase"/>
    <property type="match status" value="1"/>
</dbReference>
<dbReference type="PROSITE" id="PS00097">
    <property type="entry name" value="CARBAMOYLTRANSFERASE"/>
    <property type="match status" value="1"/>
</dbReference>
<reference key="1">
    <citation type="journal article" date="2006" name="J. Bacteriol.">
        <title>Comparative genomic analysis of three strains of Ehrlichia ruminantium reveals an active process of genome size plasticity.</title>
        <authorList>
            <person name="Frutos R."/>
            <person name="Viari A."/>
            <person name="Ferraz C."/>
            <person name="Morgat A."/>
            <person name="Eychenie S."/>
            <person name="Kandassamy Y."/>
            <person name="Chantal I."/>
            <person name="Bensaid A."/>
            <person name="Coissac E."/>
            <person name="Vachiery N."/>
            <person name="Demaille J."/>
            <person name="Martinez D."/>
        </authorList>
    </citation>
    <scope>NUCLEOTIDE SEQUENCE [LARGE SCALE GENOMIC DNA]</scope>
    <source>
        <strain>Gardel</strain>
    </source>
</reference>
<evidence type="ECO:0000255" key="1">
    <source>
        <dbReference type="HAMAP-Rule" id="MF_00001"/>
    </source>
</evidence>
<organism>
    <name type="scientific">Ehrlichia ruminantium (strain Gardel)</name>
    <dbReference type="NCBI Taxonomy" id="302409"/>
    <lineage>
        <taxon>Bacteria</taxon>
        <taxon>Pseudomonadati</taxon>
        <taxon>Pseudomonadota</taxon>
        <taxon>Alphaproteobacteria</taxon>
        <taxon>Rickettsiales</taxon>
        <taxon>Anaplasmataceae</taxon>
        <taxon>Ehrlichia</taxon>
    </lineage>
</organism>
<sequence length="297" mass="33452">MNMLLEINDLNSYDIEFIFDTAIQHFNNSNVSNNSLYGKTIVNLFFESSTRTLSSFEISAKSLGARTVTINVSTSSMNKGESIIDTVLNINAMNPDLIIIRSQYSQFIKEISKYLPNCHIINAGDGHHEHPTQALIDYCTIRYIKGKIHNLNISICGDILHSRVARSNIRLLSRYGANISIVAPPTLICNLKGVSHIHHNFVEGISDSDVIMLLRLQKERMTNFTISSEEEYAYLYMLNSENLSYARSDVIVMHPGPTNKGVEISHYVAEKKSIILLQVKMGVAVRKAILEYLLCHN</sequence>
<keyword id="KW-0665">Pyrimidine biosynthesis</keyword>
<keyword id="KW-0808">Transferase</keyword>
<feature type="chain" id="PRO_0000113131" description="Aspartate carbamoyltransferase catalytic subunit">
    <location>
        <begin position="1"/>
        <end position="297"/>
    </location>
</feature>
<feature type="binding site" evidence="1">
    <location>
        <position position="51"/>
    </location>
    <ligand>
        <name>carbamoyl phosphate</name>
        <dbReference type="ChEBI" id="CHEBI:58228"/>
    </ligand>
</feature>
<feature type="binding site" evidence="1">
    <location>
        <position position="52"/>
    </location>
    <ligand>
        <name>carbamoyl phosphate</name>
        <dbReference type="ChEBI" id="CHEBI:58228"/>
    </ligand>
</feature>
<feature type="binding site" evidence="1">
    <location>
        <position position="79"/>
    </location>
    <ligand>
        <name>L-aspartate</name>
        <dbReference type="ChEBI" id="CHEBI:29991"/>
    </ligand>
</feature>
<feature type="binding site" evidence="1">
    <location>
        <position position="101"/>
    </location>
    <ligand>
        <name>carbamoyl phosphate</name>
        <dbReference type="ChEBI" id="CHEBI:58228"/>
    </ligand>
</feature>
<feature type="binding site" evidence="1">
    <location>
        <position position="130"/>
    </location>
    <ligand>
        <name>carbamoyl phosphate</name>
        <dbReference type="ChEBI" id="CHEBI:58228"/>
    </ligand>
</feature>
<feature type="binding site" evidence="1">
    <location>
        <position position="133"/>
    </location>
    <ligand>
        <name>carbamoyl phosphate</name>
        <dbReference type="ChEBI" id="CHEBI:58228"/>
    </ligand>
</feature>
<feature type="binding site" evidence="1">
    <location>
        <position position="163"/>
    </location>
    <ligand>
        <name>L-aspartate</name>
        <dbReference type="ChEBI" id="CHEBI:29991"/>
    </ligand>
</feature>
<feature type="binding site" evidence="1">
    <location>
        <position position="215"/>
    </location>
    <ligand>
        <name>L-aspartate</name>
        <dbReference type="ChEBI" id="CHEBI:29991"/>
    </ligand>
</feature>
<feature type="binding site" evidence="1">
    <location>
        <position position="256"/>
    </location>
    <ligand>
        <name>carbamoyl phosphate</name>
        <dbReference type="ChEBI" id="CHEBI:58228"/>
    </ligand>
</feature>
<feature type="binding site" evidence="1">
    <location>
        <position position="257"/>
    </location>
    <ligand>
        <name>carbamoyl phosphate</name>
        <dbReference type="ChEBI" id="CHEBI:58228"/>
    </ligand>
</feature>